<proteinExistence type="inferred from homology"/>
<sequence>MLQGSSQHSGRDAESQALRHLQQHGLRLLAQNWLCKRGELDLVMLDGDTVVFVEVRYRKHTQWGGALGSIDGRKRQKLILAAQLFLQSESRWSSHPCRFDVVAIDGASGAEARLNWLRNAFDS</sequence>
<reference key="1">
    <citation type="journal article" date="2005" name="Nat. Biotechnol.">
        <title>Complete genome sequence of the plant commensal Pseudomonas fluorescens Pf-5.</title>
        <authorList>
            <person name="Paulsen I.T."/>
            <person name="Press C.M."/>
            <person name="Ravel J."/>
            <person name="Kobayashi D.Y."/>
            <person name="Myers G.S.A."/>
            <person name="Mavrodi D.V."/>
            <person name="DeBoy R.T."/>
            <person name="Seshadri R."/>
            <person name="Ren Q."/>
            <person name="Madupu R."/>
            <person name="Dodson R.J."/>
            <person name="Durkin A.S."/>
            <person name="Brinkac L.M."/>
            <person name="Daugherty S.C."/>
            <person name="Sullivan S.A."/>
            <person name="Rosovitz M.J."/>
            <person name="Gwinn M.L."/>
            <person name="Zhou L."/>
            <person name="Schneider D.J."/>
            <person name="Cartinhour S.W."/>
            <person name="Nelson W.C."/>
            <person name="Weidman J."/>
            <person name="Watkins K."/>
            <person name="Tran K."/>
            <person name="Khouri H."/>
            <person name="Pierson E.A."/>
            <person name="Pierson L.S. III"/>
            <person name="Thomashow L.S."/>
            <person name="Loper J.E."/>
        </authorList>
    </citation>
    <scope>NUCLEOTIDE SEQUENCE [LARGE SCALE GENOMIC DNA]</scope>
    <source>
        <strain>ATCC BAA-477 / NRRL B-23932 / Pf-5</strain>
    </source>
</reference>
<organism>
    <name type="scientific">Pseudomonas fluorescens (strain ATCC BAA-477 / NRRL B-23932 / Pf-5)</name>
    <dbReference type="NCBI Taxonomy" id="220664"/>
    <lineage>
        <taxon>Bacteria</taxon>
        <taxon>Pseudomonadati</taxon>
        <taxon>Pseudomonadota</taxon>
        <taxon>Gammaproteobacteria</taxon>
        <taxon>Pseudomonadales</taxon>
        <taxon>Pseudomonadaceae</taxon>
        <taxon>Pseudomonas</taxon>
    </lineage>
</organism>
<dbReference type="EMBL" id="CP000076">
    <property type="protein sequence ID" value="AAY94301.1"/>
    <property type="molecule type" value="Genomic_DNA"/>
</dbReference>
<dbReference type="RefSeq" id="WP_011063322.1">
    <property type="nucleotide sequence ID" value="NC_004129.6"/>
</dbReference>
<dbReference type="SMR" id="Q4K6I1"/>
<dbReference type="STRING" id="220664.PFL_5073"/>
<dbReference type="KEGG" id="pfl:PFL_5073"/>
<dbReference type="eggNOG" id="COG0792">
    <property type="taxonomic scope" value="Bacteria"/>
</dbReference>
<dbReference type="HOGENOM" id="CLU_115353_1_0_6"/>
<dbReference type="Proteomes" id="UP000008540">
    <property type="component" value="Chromosome"/>
</dbReference>
<dbReference type="GO" id="GO:0003676">
    <property type="term" value="F:nucleic acid binding"/>
    <property type="evidence" value="ECO:0007669"/>
    <property type="project" value="InterPro"/>
</dbReference>
<dbReference type="Gene3D" id="3.40.1350.10">
    <property type="match status" value="1"/>
</dbReference>
<dbReference type="HAMAP" id="MF_00048">
    <property type="entry name" value="UPF0102"/>
    <property type="match status" value="1"/>
</dbReference>
<dbReference type="InterPro" id="IPR011335">
    <property type="entry name" value="Restrct_endonuc-II-like"/>
</dbReference>
<dbReference type="InterPro" id="IPR011856">
    <property type="entry name" value="tRNA_endonuc-like_dom_sf"/>
</dbReference>
<dbReference type="InterPro" id="IPR003509">
    <property type="entry name" value="UPF0102_YraN-like"/>
</dbReference>
<dbReference type="NCBIfam" id="NF009150">
    <property type="entry name" value="PRK12497.1-3"/>
    <property type="match status" value="1"/>
</dbReference>
<dbReference type="NCBIfam" id="TIGR00252">
    <property type="entry name" value="YraN family protein"/>
    <property type="match status" value="1"/>
</dbReference>
<dbReference type="PANTHER" id="PTHR34039">
    <property type="entry name" value="UPF0102 PROTEIN YRAN"/>
    <property type="match status" value="1"/>
</dbReference>
<dbReference type="PANTHER" id="PTHR34039:SF1">
    <property type="entry name" value="UPF0102 PROTEIN YRAN"/>
    <property type="match status" value="1"/>
</dbReference>
<dbReference type="Pfam" id="PF02021">
    <property type="entry name" value="UPF0102"/>
    <property type="match status" value="1"/>
</dbReference>
<dbReference type="SUPFAM" id="SSF52980">
    <property type="entry name" value="Restriction endonuclease-like"/>
    <property type="match status" value="1"/>
</dbReference>
<gene>
    <name type="ordered locus">PFL_5073</name>
</gene>
<protein>
    <recommendedName>
        <fullName evidence="1">UPF0102 protein PFL_5073</fullName>
    </recommendedName>
</protein>
<comment type="similarity">
    <text evidence="1">Belongs to the UPF0102 family.</text>
</comment>
<accession>Q4K6I1</accession>
<feature type="chain" id="PRO_0000336229" description="UPF0102 protein PFL_5073">
    <location>
        <begin position="1"/>
        <end position="123"/>
    </location>
</feature>
<name>Y5073_PSEF5</name>
<evidence type="ECO:0000255" key="1">
    <source>
        <dbReference type="HAMAP-Rule" id="MF_00048"/>
    </source>
</evidence>